<evidence type="ECO:0000250" key="1">
    <source>
        <dbReference type="UniProtKB" id="Q96IJ6"/>
    </source>
</evidence>
<evidence type="ECO:0000269" key="2">
    <source>
    </source>
</evidence>
<evidence type="ECO:0000305" key="3"/>
<comment type="function">
    <text evidence="1 3">Regulatory subunit of the GMPPA-GMPPB mannose-1-phosphate guanylyltransferase complex; reduces the catalytic activity of GMPPB when part of the complex. Mediates allosteric feedback inhibition of GMPPB catalytic activity upon binding GDP-alpha-D-mannose. Together with GMPPB regulates GDP-alpha-D-mannose levels (By similarity). One of two paralogs (gmppaa and gmppab) that may have redundant functions (Probable).</text>
</comment>
<comment type="pathway">
    <text>Nucleotide-sugar biosynthesis; GDP-alpha-D-mannose biosynthesis; GDP-alpha-D-mannose from alpha-D-mannose 1-phosphate (GTP route): step 1/1.</text>
</comment>
<comment type="subunit">
    <text evidence="1">Component of the GMPPA-GMPPB mannose-1-phosphate guanylyltransferase complex composed of 4 GMPPA subunits and 8 GMPPB subunits; the complex is organized into three layers, a central layer made up of 2 GMPPA dimers sandwiched between two layers each made up of 2 GMPPB dimers.</text>
</comment>
<comment type="domain">
    <text evidence="1">The N-terminal substrate-binding domain adopts a Rossman-like fold and has a binding pocket for GTP or GDP-alpha-D-mannose.</text>
</comment>
<comment type="domain">
    <text evidence="1">The C-terminal domain consists of a series of tandem hexapeptide repeats that adopt a beta-helix conformation. The beta-helix forms several protein interaction surfaces involved in assembly of the GMPPA-GMPPB mannose-1-phosphate guanylyltransferase complex. A loop extending from the C-terminal domain (C-loop) is involved in interaction with other subunits of the GMPPA-GMPPB complex and may be involved in allosteric inhibition of GMPPB catalytic activity by GMPPA.</text>
</comment>
<comment type="disruption phenotype">
    <text evidence="2">Morpholino knockdown of both gmppaa and gmppab results in muscle damage and shortened motor neurons.</text>
</comment>
<comment type="similarity">
    <text evidence="3">Belongs to the transferase hexapeptide repeat family.</text>
</comment>
<name>GMPAB_DANRE</name>
<organism>
    <name type="scientific">Danio rerio</name>
    <name type="common">Zebrafish</name>
    <name type="synonym">Brachydanio rerio</name>
    <dbReference type="NCBI Taxonomy" id="7955"/>
    <lineage>
        <taxon>Eukaryota</taxon>
        <taxon>Metazoa</taxon>
        <taxon>Chordata</taxon>
        <taxon>Craniata</taxon>
        <taxon>Vertebrata</taxon>
        <taxon>Euteleostomi</taxon>
        <taxon>Actinopterygii</taxon>
        <taxon>Neopterygii</taxon>
        <taxon>Teleostei</taxon>
        <taxon>Ostariophysi</taxon>
        <taxon>Cypriniformes</taxon>
        <taxon>Danionidae</taxon>
        <taxon>Danioninae</taxon>
        <taxon>Danio</taxon>
    </lineage>
</organism>
<feature type="chain" id="PRO_0000327877" description="Mannose-1-phosphate guanylyltransferase regulatory subunit alpha-B">
    <location>
        <begin position="1"/>
        <end position="422"/>
    </location>
</feature>
<feature type="region of interest" description="Substrate-binding domain" evidence="1">
    <location>
        <begin position="2"/>
        <end position="253"/>
    </location>
</feature>
<feature type="region of interest" description="Hexapeptide repeat domain" evidence="1">
    <location>
        <begin position="275"/>
        <end position="422"/>
    </location>
</feature>
<feature type="region of interest" description="C-loop" evidence="1">
    <location>
        <begin position="358"/>
        <end position="386"/>
    </location>
</feature>
<feature type="binding site" evidence="1">
    <location>
        <position position="85"/>
    </location>
    <ligand>
        <name>GDP-alpha-D-mannose</name>
        <dbReference type="ChEBI" id="CHEBI:57527"/>
    </ligand>
</feature>
<feature type="binding site" evidence="1">
    <location>
        <position position="249"/>
    </location>
    <ligand>
        <name>GDP-alpha-D-mannose</name>
        <dbReference type="ChEBI" id="CHEBI:57527"/>
    </ligand>
</feature>
<sequence>MLKAIILIGGPQKGTRFRPLSFEVPKPLFPVAGVPMLQHHIEACAQVPDMKEIMLIGFYQPNDELNRFIYSAQQEFKIPIRYLQEFAALGTGGGIYHFRDQILSGGPAAFFLMNADVCSEFPLLEMLQFHRQHGENHCGVLLGTTANRTQSLNYGCIVENHETNEVLHFVEKPSTFVSDIINCGIYLFTPDIFAHIGKVFQRNQQEKIQEELTHGRQMPEVVRLEQDIFTALAGQKKLFVYKTQHFWSQIKSAGSAIYASRLYLKQYHQTHPERLATNQGGTPKITGDVYIHPTANIDPSAVLGPNVSIGKGVTIGGGVRVRESIILHGAVLQDHCCVLNSIVGWDSTVGKWARVEGTPSDPNPNDPYAKIDSETLFRDGGLTPSITILGCNVNIPSEVIIRNSIVLPHKDLNRSFKNQIIL</sequence>
<gene>
    <name type="primary">gmppab</name>
    <name type="ORF">zgc:66135</name>
</gene>
<dbReference type="EMBL" id="BC055506">
    <property type="protein sequence ID" value="AAH55506.1"/>
    <property type="molecule type" value="mRNA"/>
</dbReference>
<dbReference type="RefSeq" id="NP_956791.1">
    <property type="nucleotide sequence ID" value="NM_200497.1"/>
</dbReference>
<dbReference type="SMR" id="Q7SXP8"/>
<dbReference type="FunCoup" id="Q7SXP8">
    <property type="interactions" value="548"/>
</dbReference>
<dbReference type="STRING" id="7955.ENSDARP00000032669"/>
<dbReference type="PaxDb" id="7955-ENSDARP00000032669"/>
<dbReference type="GeneID" id="393469"/>
<dbReference type="KEGG" id="dre:393469"/>
<dbReference type="AGR" id="ZFIN:ZDB-GENE-040426-1550"/>
<dbReference type="CTD" id="393469"/>
<dbReference type="ZFIN" id="ZDB-GENE-040426-1550">
    <property type="gene designation" value="gmppab"/>
</dbReference>
<dbReference type="eggNOG" id="KOG1460">
    <property type="taxonomic scope" value="Eukaryota"/>
</dbReference>
<dbReference type="InParanoid" id="Q7SXP8"/>
<dbReference type="OrthoDB" id="285674at2759"/>
<dbReference type="PhylomeDB" id="Q7SXP8"/>
<dbReference type="UniPathway" id="UPA00126">
    <property type="reaction ID" value="UER00930"/>
</dbReference>
<dbReference type="PRO" id="PR:Q7SXP8"/>
<dbReference type="Proteomes" id="UP000000437">
    <property type="component" value="Chromosome 6"/>
</dbReference>
<dbReference type="GO" id="GO:0005737">
    <property type="term" value="C:cytoplasm"/>
    <property type="evidence" value="ECO:0000318"/>
    <property type="project" value="GO_Central"/>
</dbReference>
<dbReference type="GO" id="GO:0005525">
    <property type="term" value="F:GTP binding"/>
    <property type="evidence" value="ECO:0007669"/>
    <property type="project" value="UniProtKB-KW"/>
</dbReference>
<dbReference type="GO" id="GO:0004475">
    <property type="term" value="F:mannose-1-phosphate guanylyltransferase (GTP) activity"/>
    <property type="evidence" value="ECO:0007669"/>
    <property type="project" value="UniProtKB-EC"/>
</dbReference>
<dbReference type="GO" id="GO:0009298">
    <property type="term" value="P:GDP-mannose biosynthetic process"/>
    <property type="evidence" value="ECO:0007669"/>
    <property type="project" value="UniProtKB-UniPathway"/>
</dbReference>
<dbReference type="CDD" id="cd06428">
    <property type="entry name" value="M1P_guanylylT_A_like_N"/>
    <property type="match status" value="1"/>
</dbReference>
<dbReference type="FunFam" id="3.90.550.10:FF:000071">
    <property type="entry name" value="Mannose-1-phosphate guanyltransferase alpha"/>
    <property type="match status" value="1"/>
</dbReference>
<dbReference type="Gene3D" id="2.160.10.10">
    <property type="entry name" value="Hexapeptide repeat proteins"/>
    <property type="match status" value="1"/>
</dbReference>
<dbReference type="Gene3D" id="3.90.550.10">
    <property type="entry name" value="Spore Coat Polysaccharide Biosynthesis Protein SpsA, Chain A"/>
    <property type="match status" value="1"/>
</dbReference>
<dbReference type="InterPro" id="IPR056729">
    <property type="entry name" value="GMPPB_C"/>
</dbReference>
<dbReference type="InterPro" id="IPR018357">
    <property type="entry name" value="Hexapep_transf_CS"/>
</dbReference>
<dbReference type="InterPro" id="IPR050486">
    <property type="entry name" value="Mannose-1P_guanyltransferase"/>
</dbReference>
<dbReference type="InterPro" id="IPR005835">
    <property type="entry name" value="NTP_transferase_dom"/>
</dbReference>
<dbReference type="InterPro" id="IPR029044">
    <property type="entry name" value="Nucleotide-diphossugar_trans"/>
</dbReference>
<dbReference type="PANTHER" id="PTHR22572">
    <property type="entry name" value="SUGAR-1-PHOSPHATE GUANYL TRANSFERASE"/>
    <property type="match status" value="1"/>
</dbReference>
<dbReference type="Pfam" id="PF25087">
    <property type="entry name" value="GMPPB_C"/>
    <property type="match status" value="1"/>
</dbReference>
<dbReference type="Pfam" id="PF00483">
    <property type="entry name" value="NTP_transferase"/>
    <property type="match status" value="1"/>
</dbReference>
<dbReference type="SUPFAM" id="SSF53448">
    <property type="entry name" value="Nucleotide-diphospho-sugar transferases"/>
    <property type="match status" value="1"/>
</dbReference>
<dbReference type="PROSITE" id="PS00101">
    <property type="entry name" value="HEXAPEP_TRANSFERASES"/>
    <property type="match status" value="1"/>
</dbReference>
<protein>
    <recommendedName>
        <fullName>Mannose-1-phosphate guanylyltransferase regulatory subunit alpha-B</fullName>
    </recommendedName>
    <alternativeName>
        <fullName>GDP-mannose pyrophosphorylase A-B</fullName>
    </alternativeName>
    <alternativeName>
        <fullName>GTP-mannose-1-phosphate guanylyltransferase alpha-b</fullName>
    </alternativeName>
</protein>
<reference key="1">
    <citation type="submission" date="2003-08" db="EMBL/GenBank/DDBJ databases">
        <authorList>
            <consortium name="NIH - Zebrafish Gene Collection (ZGC) project"/>
        </authorList>
    </citation>
    <scope>NUCLEOTIDE SEQUENCE [LARGE SCALE MRNA]</scope>
    <source>
        <strain>AB</strain>
    </source>
</reference>
<reference key="2">
    <citation type="journal article" date="2021" name="Nat. Struct. Mol. Biol.">
        <title>Cryo-EM structures of human GMPPA-GMPPB complex reveal how cells maintain GDP-mannose homeostasis.</title>
        <authorList>
            <person name="Zheng L."/>
            <person name="Liu Z."/>
            <person name="Wang Y."/>
            <person name="Yang F."/>
            <person name="Wang J."/>
            <person name="Huang W."/>
            <person name="Qin J."/>
            <person name="Tian M."/>
            <person name="Cai X."/>
            <person name="Liu X."/>
            <person name="Mo X."/>
            <person name="Gao N."/>
            <person name="Jia D."/>
        </authorList>
    </citation>
    <scope>DISRUPTION PHENOTYPE</scope>
</reference>
<proteinExistence type="evidence at transcript level"/>
<keyword id="KW-0342">GTP-binding</keyword>
<keyword id="KW-0547">Nucleotide-binding</keyword>
<keyword id="KW-0548">Nucleotidyltransferase</keyword>
<keyword id="KW-1185">Reference proteome</keyword>
<keyword id="KW-0808">Transferase</keyword>
<accession>Q7SXP8</accession>